<organism>
    <name type="scientific">Dictyostelium discoideum</name>
    <name type="common">Social amoeba</name>
    <dbReference type="NCBI Taxonomy" id="44689"/>
    <lineage>
        <taxon>Eukaryota</taxon>
        <taxon>Amoebozoa</taxon>
        <taxon>Evosea</taxon>
        <taxon>Eumycetozoa</taxon>
        <taxon>Dictyostelia</taxon>
        <taxon>Dictyosteliales</taxon>
        <taxon>Dictyosteliaceae</taxon>
        <taxon>Dictyostelium</taxon>
    </lineage>
</organism>
<evidence type="ECO:0000250" key="1"/>
<evidence type="ECO:0000305" key="2"/>
<proteinExistence type="inferred from homology"/>
<sequence length="140" mass="16126">MSSTKAPVPPTQAEIQQIQDQLIKARDAFQVHETELQKLSASRSKLLTQLNENEMVKKEFDLLESEAKIYKLNGPVLFKQTKEEAENTITSRLDIINNNLKTIETNFKDIEKKAMEQRNKIFEYQNKIRSLTAPPPPQAQ</sequence>
<gene>
    <name type="primary">pfdn6</name>
    <name type="ORF">DDB_G0286147</name>
</gene>
<protein>
    <recommendedName>
        <fullName>Probable prefoldin subunit 6</fullName>
    </recommendedName>
</protein>
<accession>Q54M71</accession>
<reference key="1">
    <citation type="journal article" date="2005" name="Nature">
        <title>The genome of the social amoeba Dictyostelium discoideum.</title>
        <authorList>
            <person name="Eichinger L."/>
            <person name="Pachebat J.A."/>
            <person name="Gloeckner G."/>
            <person name="Rajandream M.A."/>
            <person name="Sucgang R."/>
            <person name="Berriman M."/>
            <person name="Song J."/>
            <person name="Olsen R."/>
            <person name="Szafranski K."/>
            <person name="Xu Q."/>
            <person name="Tunggal B."/>
            <person name="Kummerfeld S."/>
            <person name="Madera M."/>
            <person name="Konfortov B.A."/>
            <person name="Rivero F."/>
            <person name="Bankier A.T."/>
            <person name="Lehmann R."/>
            <person name="Hamlin N."/>
            <person name="Davies R."/>
            <person name="Gaudet P."/>
            <person name="Fey P."/>
            <person name="Pilcher K."/>
            <person name="Chen G."/>
            <person name="Saunders D."/>
            <person name="Sodergren E.J."/>
            <person name="Davis P."/>
            <person name="Kerhornou A."/>
            <person name="Nie X."/>
            <person name="Hall N."/>
            <person name="Anjard C."/>
            <person name="Hemphill L."/>
            <person name="Bason N."/>
            <person name="Farbrother P."/>
            <person name="Desany B."/>
            <person name="Just E."/>
            <person name="Morio T."/>
            <person name="Rost R."/>
            <person name="Churcher C.M."/>
            <person name="Cooper J."/>
            <person name="Haydock S."/>
            <person name="van Driessche N."/>
            <person name="Cronin A."/>
            <person name="Goodhead I."/>
            <person name="Muzny D.M."/>
            <person name="Mourier T."/>
            <person name="Pain A."/>
            <person name="Lu M."/>
            <person name="Harper D."/>
            <person name="Lindsay R."/>
            <person name="Hauser H."/>
            <person name="James K.D."/>
            <person name="Quiles M."/>
            <person name="Madan Babu M."/>
            <person name="Saito T."/>
            <person name="Buchrieser C."/>
            <person name="Wardroper A."/>
            <person name="Felder M."/>
            <person name="Thangavelu M."/>
            <person name="Johnson D."/>
            <person name="Knights A."/>
            <person name="Loulseged H."/>
            <person name="Mungall K.L."/>
            <person name="Oliver K."/>
            <person name="Price C."/>
            <person name="Quail M.A."/>
            <person name="Urushihara H."/>
            <person name="Hernandez J."/>
            <person name="Rabbinowitsch E."/>
            <person name="Steffen D."/>
            <person name="Sanders M."/>
            <person name="Ma J."/>
            <person name="Kohara Y."/>
            <person name="Sharp S."/>
            <person name="Simmonds M.N."/>
            <person name="Spiegler S."/>
            <person name="Tivey A."/>
            <person name="Sugano S."/>
            <person name="White B."/>
            <person name="Walker D."/>
            <person name="Woodward J.R."/>
            <person name="Winckler T."/>
            <person name="Tanaka Y."/>
            <person name="Shaulsky G."/>
            <person name="Schleicher M."/>
            <person name="Weinstock G.M."/>
            <person name="Rosenthal A."/>
            <person name="Cox E.C."/>
            <person name="Chisholm R.L."/>
            <person name="Gibbs R.A."/>
            <person name="Loomis W.F."/>
            <person name="Platzer M."/>
            <person name="Kay R.R."/>
            <person name="Williams J.G."/>
            <person name="Dear P.H."/>
            <person name="Noegel A.A."/>
            <person name="Barrell B.G."/>
            <person name="Kuspa A."/>
        </authorList>
    </citation>
    <scope>NUCLEOTIDE SEQUENCE [LARGE SCALE GENOMIC DNA]</scope>
    <source>
        <strain>AX4</strain>
    </source>
</reference>
<comment type="function">
    <text evidence="1">Binds specifically to cytosolic chaperonin (c-CPN) and transfers target proteins to it. Binds to nascent polypeptide chain and promotes folding in an environment in which there are many competing pathways for nonnative proteins (By similarity).</text>
</comment>
<comment type="subunit">
    <text evidence="1">Heterohexamer of two PFD-alpha type and four PFD-beta type subunits.</text>
</comment>
<comment type="similarity">
    <text evidence="2">Belongs to the prefoldin subunit beta family.</text>
</comment>
<dbReference type="EMBL" id="AAFI02000085">
    <property type="protein sequence ID" value="EAL64366.1"/>
    <property type="molecule type" value="Genomic_DNA"/>
</dbReference>
<dbReference type="RefSeq" id="XP_637877.1">
    <property type="nucleotide sequence ID" value="XM_632785.1"/>
</dbReference>
<dbReference type="SMR" id="Q54M71"/>
<dbReference type="FunCoup" id="Q54M71">
    <property type="interactions" value="619"/>
</dbReference>
<dbReference type="STRING" id="44689.Q54M71"/>
<dbReference type="GlyGen" id="Q54M71">
    <property type="glycosylation" value="1 site"/>
</dbReference>
<dbReference type="PaxDb" id="44689-DDB0237721"/>
<dbReference type="EnsemblProtists" id="EAL64366">
    <property type="protein sequence ID" value="EAL64366"/>
    <property type="gene ID" value="DDB_G0286147"/>
</dbReference>
<dbReference type="GeneID" id="8625474"/>
<dbReference type="KEGG" id="ddi:DDB_G0286147"/>
<dbReference type="dictyBase" id="DDB_G0286147">
    <property type="gene designation" value="pfdn6"/>
</dbReference>
<dbReference type="VEuPathDB" id="AmoebaDB:DDB_G0286147"/>
<dbReference type="eggNOG" id="KOG3478">
    <property type="taxonomic scope" value="Eukaryota"/>
</dbReference>
<dbReference type="HOGENOM" id="CLU_125172_0_1_1"/>
<dbReference type="InParanoid" id="Q54M71"/>
<dbReference type="OMA" id="VQTEFAQ"/>
<dbReference type="PhylomeDB" id="Q54M71"/>
<dbReference type="PRO" id="PR:Q54M71"/>
<dbReference type="Proteomes" id="UP000002195">
    <property type="component" value="Chromosome 4"/>
</dbReference>
<dbReference type="GO" id="GO:0005737">
    <property type="term" value="C:cytoplasm"/>
    <property type="evidence" value="ECO:0000318"/>
    <property type="project" value="GO_Central"/>
</dbReference>
<dbReference type="GO" id="GO:0016272">
    <property type="term" value="C:prefoldin complex"/>
    <property type="evidence" value="ECO:0000250"/>
    <property type="project" value="dictyBase"/>
</dbReference>
<dbReference type="GO" id="GO:0051087">
    <property type="term" value="F:protein-folding chaperone binding"/>
    <property type="evidence" value="ECO:0000318"/>
    <property type="project" value="GO_Central"/>
</dbReference>
<dbReference type="GO" id="GO:0051082">
    <property type="term" value="F:unfolded protein binding"/>
    <property type="evidence" value="ECO:0007669"/>
    <property type="project" value="InterPro"/>
</dbReference>
<dbReference type="GO" id="GO:0051131">
    <property type="term" value="P:chaperone-mediated protein complex assembly"/>
    <property type="evidence" value="ECO:0000318"/>
    <property type="project" value="GO_Central"/>
</dbReference>
<dbReference type="GO" id="GO:0006457">
    <property type="term" value="P:protein folding"/>
    <property type="evidence" value="ECO:0000318"/>
    <property type="project" value="GO_Central"/>
</dbReference>
<dbReference type="CDD" id="cd23161">
    <property type="entry name" value="Prefoldin_6"/>
    <property type="match status" value="1"/>
</dbReference>
<dbReference type="FunFam" id="1.10.287.370:FF:000003">
    <property type="entry name" value="Prefoldin subunit 6"/>
    <property type="match status" value="1"/>
</dbReference>
<dbReference type="Gene3D" id="1.10.287.370">
    <property type="match status" value="1"/>
</dbReference>
<dbReference type="InterPro" id="IPR002777">
    <property type="entry name" value="PFD_beta-like"/>
</dbReference>
<dbReference type="InterPro" id="IPR009053">
    <property type="entry name" value="Prefoldin"/>
</dbReference>
<dbReference type="PANTHER" id="PTHR21431">
    <property type="entry name" value="PREFOLDIN SUBUNIT 6"/>
    <property type="match status" value="1"/>
</dbReference>
<dbReference type="PANTHER" id="PTHR21431:SF0">
    <property type="entry name" value="PREFOLDIN SUBUNIT 6"/>
    <property type="match status" value="1"/>
</dbReference>
<dbReference type="Pfam" id="PF01920">
    <property type="entry name" value="Prefoldin_2"/>
    <property type="match status" value="1"/>
</dbReference>
<dbReference type="SUPFAM" id="SSF46579">
    <property type="entry name" value="Prefoldin"/>
    <property type="match status" value="1"/>
</dbReference>
<feature type="chain" id="PRO_0000328108" description="Probable prefoldin subunit 6">
    <location>
        <begin position="1"/>
        <end position="140"/>
    </location>
</feature>
<keyword id="KW-0143">Chaperone</keyword>
<keyword id="KW-1185">Reference proteome</keyword>
<name>PFD6_DICDI</name>